<protein>
    <recommendedName>
        <fullName>Nuclease SbcCD subunit C</fullName>
    </recommendedName>
</protein>
<accession>Q2FH88</accession>
<proteinExistence type="inferred from homology"/>
<reference key="1">
    <citation type="journal article" date="2006" name="Lancet">
        <title>Complete genome sequence of USA300, an epidemic clone of community-acquired meticillin-resistant Staphylococcus aureus.</title>
        <authorList>
            <person name="Diep B.A."/>
            <person name="Gill S.R."/>
            <person name="Chang R.F."/>
            <person name="Phan T.H."/>
            <person name="Chen J.H."/>
            <person name="Davidson M.G."/>
            <person name="Lin F."/>
            <person name="Lin J."/>
            <person name="Carleton H.A."/>
            <person name="Mongodin E.F."/>
            <person name="Sensabaugh G.F."/>
            <person name="Perdreau-Remington F."/>
        </authorList>
    </citation>
    <scope>NUCLEOTIDE SEQUENCE [LARGE SCALE GENOMIC DNA]</scope>
    <source>
        <strain>USA300</strain>
    </source>
</reference>
<keyword id="KW-0067">ATP-binding</keyword>
<keyword id="KW-0175">Coiled coil</keyword>
<keyword id="KW-0233">DNA recombination</keyword>
<keyword id="KW-0235">DNA replication</keyword>
<keyword id="KW-0255">Endonuclease</keyword>
<keyword id="KW-0269">Exonuclease</keyword>
<keyword id="KW-0378">Hydrolase</keyword>
<keyword id="KW-0540">Nuclease</keyword>
<keyword id="KW-0547">Nucleotide-binding</keyword>
<organism>
    <name type="scientific">Staphylococcus aureus (strain USA300)</name>
    <dbReference type="NCBI Taxonomy" id="367830"/>
    <lineage>
        <taxon>Bacteria</taxon>
        <taxon>Bacillati</taxon>
        <taxon>Bacillota</taxon>
        <taxon>Bacilli</taxon>
        <taxon>Bacillales</taxon>
        <taxon>Staphylococcaceae</taxon>
        <taxon>Staphylococcus</taxon>
    </lineage>
</organism>
<dbReference type="EMBL" id="CP000255">
    <property type="protein sequence ID" value="ABD20847.1"/>
    <property type="molecule type" value="Genomic_DNA"/>
</dbReference>
<dbReference type="SMR" id="Q2FH88"/>
<dbReference type="KEGG" id="saa:SAUSA300_1243"/>
<dbReference type="HOGENOM" id="CLU_004785_2_1_9"/>
<dbReference type="Proteomes" id="UP000001939">
    <property type="component" value="Chromosome"/>
</dbReference>
<dbReference type="GO" id="GO:0005524">
    <property type="term" value="F:ATP binding"/>
    <property type="evidence" value="ECO:0007669"/>
    <property type="project" value="UniProtKB-KW"/>
</dbReference>
<dbReference type="GO" id="GO:0016887">
    <property type="term" value="F:ATP hydrolysis activity"/>
    <property type="evidence" value="ECO:0007669"/>
    <property type="project" value="InterPro"/>
</dbReference>
<dbReference type="GO" id="GO:0004519">
    <property type="term" value="F:endonuclease activity"/>
    <property type="evidence" value="ECO:0007669"/>
    <property type="project" value="UniProtKB-KW"/>
</dbReference>
<dbReference type="GO" id="GO:0004527">
    <property type="term" value="F:exonuclease activity"/>
    <property type="evidence" value="ECO:0007669"/>
    <property type="project" value="UniProtKB-KW"/>
</dbReference>
<dbReference type="GO" id="GO:0006310">
    <property type="term" value="P:DNA recombination"/>
    <property type="evidence" value="ECO:0007669"/>
    <property type="project" value="UniProtKB-KW"/>
</dbReference>
<dbReference type="GO" id="GO:0006260">
    <property type="term" value="P:DNA replication"/>
    <property type="evidence" value="ECO:0007669"/>
    <property type="project" value="UniProtKB-KW"/>
</dbReference>
<dbReference type="GO" id="GO:0006302">
    <property type="term" value="P:double-strand break repair"/>
    <property type="evidence" value="ECO:0007669"/>
    <property type="project" value="InterPro"/>
</dbReference>
<dbReference type="CDD" id="cd03279">
    <property type="entry name" value="ABC_sbcCD"/>
    <property type="match status" value="1"/>
</dbReference>
<dbReference type="Gene3D" id="1.10.287.510">
    <property type="entry name" value="Helix hairpin bin"/>
    <property type="match status" value="1"/>
</dbReference>
<dbReference type="Gene3D" id="3.40.50.300">
    <property type="entry name" value="P-loop containing nucleotide triphosphate hydrolases"/>
    <property type="match status" value="2"/>
</dbReference>
<dbReference type="InterPro" id="IPR027417">
    <property type="entry name" value="P-loop_NTPase"/>
</dbReference>
<dbReference type="InterPro" id="IPR038729">
    <property type="entry name" value="Rad50/SbcC_AAA"/>
</dbReference>
<dbReference type="InterPro" id="IPR053380">
    <property type="entry name" value="SbcCD_Nuclease_C"/>
</dbReference>
<dbReference type="NCBIfam" id="NF041751">
    <property type="entry name" value="sbcc_Staph"/>
    <property type="match status" value="1"/>
</dbReference>
<dbReference type="PANTHER" id="PTHR32114">
    <property type="entry name" value="ABC TRANSPORTER ABCH.3"/>
    <property type="match status" value="1"/>
</dbReference>
<dbReference type="PANTHER" id="PTHR32114:SF2">
    <property type="entry name" value="ABC TRANSPORTER ABCH.3"/>
    <property type="match status" value="1"/>
</dbReference>
<dbReference type="Pfam" id="PF13476">
    <property type="entry name" value="AAA_23"/>
    <property type="match status" value="1"/>
</dbReference>
<dbReference type="Pfam" id="PF13558">
    <property type="entry name" value="SbcC_Walker_B"/>
    <property type="match status" value="1"/>
</dbReference>
<dbReference type="SUPFAM" id="SSF52540">
    <property type="entry name" value="P-loop containing nucleoside triphosphate hydrolases"/>
    <property type="match status" value="1"/>
</dbReference>
<dbReference type="SUPFAM" id="SSF75712">
    <property type="entry name" value="Rad50 coiled-coil Zn hook"/>
    <property type="match status" value="1"/>
</dbReference>
<name>SBCC_STAA3</name>
<comment type="function">
    <text evidence="1">SbcCD cleaves DNA hairpin structures. These structures can inhibit DNA replication and are intermediates in certain DNA recombination reactions. The complex acts as a 3'-&gt;5' double strand exonuclease that can open hairpins. It also has a 5' single-strand endonuclease activity (By similarity).</text>
</comment>
<comment type="subunit">
    <text evidence="1">Heterodimer of SbcC and SbcD.</text>
</comment>
<comment type="similarity">
    <text evidence="3">Belongs to the SMC family. SbcC subfamily.</text>
</comment>
<feature type="chain" id="PRO_0000338473" description="Nuclease SbcCD subunit C">
    <location>
        <begin position="1"/>
        <end position="1009"/>
    </location>
</feature>
<feature type="coiled-coil region" evidence="2">
    <location>
        <begin position="176"/>
        <end position="364"/>
    </location>
</feature>
<feature type="coiled-coil region" evidence="2">
    <location>
        <begin position="392"/>
        <end position="502"/>
    </location>
</feature>
<feature type="coiled-coil region" evidence="2">
    <location>
        <begin position="535"/>
        <end position="802"/>
    </location>
</feature>
<feature type="binding site" evidence="2">
    <location>
        <begin position="34"/>
        <end position="41"/>
    </location>
    <ligand>
        <name>ATP</name>
        <dbReference type="ChEBI" id="CHEBI:30616"/>
    </ligand>
</feature>
<gene>
    <name type="primary">sbcC</name>
    <name type="ordered locus">SAUSA300_1243</name>
</gene>
<evidence type="ECO:0000250" key="1"/>
<evidence type="ECO:0000255" key="2"/>
<evidence type="ECO:0000305" key="3"/>
<sequence>MKPLHLKLNNFGPFLKEEIDFSKIDNNELFLISGKTGSGKTMIFDAMTYALFGKASTEQREENDLRSHFADGKQPMSVTFEFQLNHRIYKVHRQGPYIKEGNTTKTNAKFDVFEMVDGKYEIRESKVISGTQFIIELLGVNADQFRQLFILPQGEFKRFLISNSREKQGILRTLFDSEKFEAIREILKEEVKKEKAQIENRYQQIDLLWQEIESFDDDNIKGLLEVATQQIDKLIENIPLLQARSKEILASVNESKETAIKEFEIIEKKTLENNILKDNINQLNKNKIDFVQLKEQQPEIEGIEAKLKLLQDITNLLNYIENREKIETKIANSKKDISKTNNKILNLDCDKRNIDKEKKMLEENGDLIESKISFIDKTRVLFNDINKYQQSYLNIERLRTEGEQLGDELNDLIKGLETVEDSIGNNQSDYEKIIELNNTITNINNEINIIKENEKAKAELDKLLGSKQELENQINEETSILKNLEIKLDRYDKTKLDLNDKESFISEIKSAVNIGDQCPICGNEIQDLGHHIDFDSIAKRQNEIKEIEANIHAIKSNIAVHNSEIKFVNEKISNINIKTQSDFSLEVLNKRLLENENALNNQRDLNKFIEQMKEEKDNLTLQIHNKQLRLNKNESELKLCRDLITEFETLSKYNNITNFEVDYKKYVQDVNQHQELSKEIEDKLMQLSQRKLIEQNNLNHYENQLETYNNDLELNEQSIEMEMSRLNLTDDNDIDEIIAWRGEQEELEQKRDTYKKRYHEIEMEIARLESLTKDKELLDSDKLKDEYELKKGKMNTLIDEYSAVHYQCQNNINKTQSIVSHINYLNQELKDQQEIFQLAEIVSGKNNKNLTLENFVLIYYLDQIIAQANLRLATMSDNRYQLIRREAVSHGLSGLEIDVFDLHSNKSRHISSLSGGETFQSSLALALGLSEIVQQQSGGISLESIFIDEGFGTLDQETLETALDTLLNLKSTGRMVGIISHVSELKNRIPLVLEVKSDQYQSSTRFKRN</sequence>